<feature type="transit peptide" description="Chloroplast" evidence="1">
    <location>
        <begin position="1"/>
        <end position="51"/>
    </location>
</feature>
<feature type="chain" id="PRO_0000435457" description="sn-2 acyl-lipid omega-3 desaturase (ferredoxin), chloroplastic" evidence="1">
    <location>
        <begin position="52"/>
        <end position="443"/>
    </location>
</feature>
<feature type="transmembrane region" description="Helical" evidence="1">
    <location>
        <begin position="120"/>
        <end position="140"/>
    </location>
</feature>
<feature type="transmembrane region" description="Helical" evidence="1">
    <location>
        <begin position="143"/>
        <end position="163"/>
    </location>
</feature>
<feature type="transmembrane region" description="Helical" evidence="1">
    <location>
        <begin position="281"/>
        <end position="301"/>
    </location>
</feature>
<feature type="transmembrane region" description="Helical" evidence="1">
    <location>
        <begin position="304"/>
        <end position="324"/>
    </location>
</feature>
<feature type="short sequence motif" description="Histidine box-1" evidence="4">
    <location>
        <begin position="165"/>
        <end position="169"/>
    </location>
</feature>
<feature type="short sequence motif" description="Histidine box-2" evidence="4">
    <location>
        <begin position="201"/>
        <end position="205"/>
    </location>
</feature>
<feature type="short sequence motif" description="Histidine box-3" evidence="4">
    <location>
        <begin position="368"/>
        <end position="372"/>
    </location>
</feature>
<protein>
    <recommendedName>
        <fullName evidence="3">sn-2 acyl-lipid omega-3 desaturase (ferredoxin), chloroplastic</fullName>
        <ecNumber evidence="2">1.14.19.35</ecNumber>
    </recommendedName>
    <alternativeName>
        <fullName evidence="3">Omega-3 fatty acid desaturase 7, chloroplastic</fullName>
        <shortName evidence="3">HaFAD7</shortName>
    </alternativeName>
</protein>
<proteinExistence type="evidence at protein level"/>
<evidence type="ECO:0000255" key="1"/>
<evidence type="ECO:0000269" key="2">
    <source>
    </source>
</evidence>
<evidence type="ECO:0000303" key="3">
    <source>
    </source>
</evidence>
<evidence type="ECO:0000305" key="4"/>
<evidence type="ECO:0000312" key="5">
    <source>
        <dbReference type="EMBL" id="AAP78965.1"/>
    </source>
</evidence>
<comment type="function">
    <text evidence="2">Chloroplast omega-3 fatty acid desaturase introduces the third double bond in the biosynthesis of 18:3, and probably also 16:3 fatty acids, important constituents of plant membranes. It is thought to use ferredoxin as an electron donor and to act on fatty acids esterified to galactolipids, sulfolipids and phosphatidylglycerol.</text>
</comment>
<comment type="catalytic activity">
    <reaction evidence="4">
        <text>a (7Z,10Z)-hexadecadienoyl-containing glycerolipid + 2 reduced [2Fe-2S]-[ferredoxin] + O2 + 2 H(+) = a (7Z,10Z,13Z)-hexadecatrienoyl-containing glycerolipid + 2 oxidized [2Fe-2S]-[ferredoxin] + 2 H2O</text>
        <dbReference type="Rhea" id="RHEA:46412"/>
        <dbReference type="Rhea" id="RHEA-COMP:10000"/>
        <dbReference type="Rhea" id="RHEA-COMP:10001"/>
        <dbReference type="ChEBI" id="CHEBI:15377"/>
        <dbReference type="ChEBI" id="CHEBI:15378"/>
        <dbReference type="ChEBI" id="CHEBI:15379"/>
        <dbReference type="ChEBI" id="CHEBI:33737"/>
        <dbReference type="ChEBI" id="CHEBI:33738"/>
        <dbReference type="ChEBI" id="CHEBI:88268"/>
        <dbReference type="ChEBI" id="CHEBI:88269"/>
        <dbReference type="EC" id="1.14.19.35"/>
    </reaction>
</comment>
<comment type="catalytic activity">
    <reaction evidence="2">
        <text>a (9Z,12Z)-octadecadienoyl-containing glycerolipid + 2 reduced [2Fe-2S]-[ferredoxin] + O2 + 2 H(+) = (9Z,12Z,15Z)-octadecatrienoyl-containing glycerolipid + 2 oxidized [2Fe-2S]-[ferredoxin] + 2 H2O</text>
        <dbReference type="Rhea" id="RHEA:46408"/>
        <dbReference type="Rhea" id="RHEA-COMP:10000"/>
        <dbReference type="Rhea" id="RHEA-COMP:10001"/>
        <dbReference type="ChEBI" id="CHEBI:15377"/>
        <dbReference type="ChEBI" id="CHEBI:15378"/>
        <dbReference type="ChEBI" id="CHEBI:15379"/>
        <dbReference type="ChEBI" id="CHEBI:33737"/>
        <dbReference type="ChEBI" id="CHEBI:33738"/>
        <dbReference type="ChEBI" id="CHEBI:88351"/>
        <dbReference type="ChEBI" id="CHEBI:90078"/>
        <dbReference type="EC" id="1.14.19.35"/>
    </reaction>
</comment>
<comment type="pathway">
    <text evidence="2">Lipid metabolism; polyunsaturated fatty acid biosynthesis.</text>
</comment>
<comment type="subcellular location">
    <subcellularLocation>
        <location evidence="1">Plastid</location>
        <location evidence="1">Chloroplast membrane</location>
        <topology evidence="1">Multi-pass membrane protein</topology>
    </subcellularLocation>
</comment>
<comment type="tissue specificity">
    <text evidence="2">Highly expressed in leaves and cotyledons, while no or little expression detected in mature seeds, roots and stems.</text>
</comment>
<comment type="domain">
    <text evidence="4">The histidine box domains may contain the active site and/or be involved in metal ion binding.</text>
</comment>
<comment type="similarity">
    <text evidence="4">Belongs to the fatty acid desaturase type 1 family.</text>
</comment>
<accession>Q56VS4</accession>
<gene>
    <name evidence="3" type="primary">FAD7</name>
</gene>
<dbReference type="EC" id="1.14.19.35" evidence="2"/>
<dbReference type="EMBL" id="AY254858">
    <property type="protein sequence ID" value="AAP78965.1"/>
    <property type="molecule type" value="mRNA"/>
</dbReference>
<dbReference type="SMR" id="Q56VS4"/>
<dbReference type="BRENDA" id="1.14.19.35">
    <property type="organism ID" value="2597"/>
</dbReference>
<dbReference type="UniPathway" id="UPA00658"/>
<dbReference type="GO" id="GO:0031969">
    <property type="term" value="C:chloroplast membrane"/>
    <property type="evidence" value="ECO:0007669"/>
    <property type="project" value="UniProtKB-SubCell"/>
</dbReference>
<dbReference type="GO" id="GO:0016717">
    <property type="term" value="F:oxidoreductase activity, acting on paired donors, with oxidation of a pair of donors resulting in the reduction of molecular oxygen to two molecules of water"/>
    <property type="evidence" value="ECO:0000314"/>
    <property type="project" value="UniProtKB"/>
</dbReference>
<dbReference type="GO" id="GO:0102993">
    <property type="term" value="F:sn-2 acyl-lipid omega-3 desaturase (ferredoxin) activity"/>
    <property type="evidence" value="ECO:0007669"/>
    <property type="project" value="UniProtKB-EC"/>
</dbReference>
<dbReference type="GO" id="GO:0006636">
    <property type="term" value="P:unsaturated fatty acid biosynthetic process"/>
    <property type="evidence" value="ECO:0000314"/>
    <property type="project" value="UniProtKB"/>
</dbReference>
<dbReference type="CDD" id="cd03507">
    <property type="entry name" value="Delta12-FADS-like"/>
    <property type="match status" value="1"/>
</dbReference>
<dbReference type="InterPro" id="IPR005804">
    <property type="entry name" value="FA_desaturase_dom"/>
</dbReference>
<dbReference type="InterPro" id="IPR021863">
    <property type="entry name" value="FAS_N"/>
</dbReference>
<dbReference type="InterPro" id="IPR012171">
    <property type="entry name" value="Fatty_acid_desaturase"/>
</dbReference>
<dbReference type="PANTHER" id="PTHR32100">
    <property type="entry name" value="OMEGA-6 FATTY ACID DESATURASE, CHLOROPLASTIC"/>
    <property type="match status" value="1"/>
</dbReference>
<dbReference type="Pfam" id="PF11960">
    <property type="entry name" value="DUF3474"/>
    <property type="match status" value="1"/>
</dbReference>
<dbReference type="Pfam" id="PF00487">
    <property type="entry name" value="FA_desaturase"/>
    <property type="match status" value="1"/>
</dbReference>
<name>FAD3C_HELAN</name>
<keyword id="KW-0150">Chloroplast</keyword>
<keyword id="KW-0472">Membrane</keyword>
<keyword id="KW-0560">Oxidoreductase</keyword>
<keyword id="KW-0934">Plastid</keyword>
<keyword id="KW-0809">Transit peptide</keyword>
<keyword id="KW-0812">Transmembrane</keyword>
<keyword id="KW-1133">Transmembrane helix</keyword>
<organism evidence="5">
    <name type="scientific">Helianthus annuus</name>
    <name type="common">Common sunflower</name>
    <dbReference type="NCBI Taxonomy" id="4232"/>
    <lineage>
        <taxon>Eukaryota</taxon>
        <taxon>Viridiplantae</taxon>
        <taxon>Streptophyta</taxon>
        <taxon>Embryophyta</taxon>
        <taxon>Tracheophyta</taxon>
        <taxon>Spermatophyta</taxon>
        <taxon>Magnoliopsida</taxon>
        <taxon>eudicotyledons</taxon>
        <taxon>Gunneridae</taxon>
        <taxon>Pentapetalae</taxon>
        <taxon>asterids</taxon>
        <taxon>campanulids</taxon>
        <taxon>Asterales</taxon>
        <taxon>Asteraceae</taxon>
        <taxon>Asteroideae</taxon>
        <taxon>Heliantheae alliance</taxon>
        <taxon>Heliantheae</taxon>
        <taxon>Helianthus</taxon>
    </lineage>
</organism>
<sequence length="443" mass="50808">MAGLVLSGCAIKPFSQSLPIPTKRFITNPSNINLLHPKDPIFSPNFHGFSRWAVKVSAPLRIPSIDQQDLDLDLERERISSLDVQEEEIFDAGAPPPFKLADIRAAIPKRCWVKDPWRSMSYVVRDVAIVLGLAAAAAHLNNWLVWPLYWAAQGTMFWALFVLGHDCGHGSFSNNAKLNSVVGHLLHSSILVPYHGWRISHRTHHQNHGHVENDESWHPLTEKTFKSLDWITRTLRFTLPFPMLAYPFYLWNRSPGKSGSHFDPSSDLFVPAEQKDVITSTICWTTMLALLFGLNFVVGPVQMLKLYGIPYLINVMWLDFVTYLHHHGHEDKLPWYRGKEWSYLRGGLTTIDRDYGWINNIHHDIGTHVIHHLFPQIPHYHLIEATEAAKPVLGKYYREPKKSSPIPFHLLGELVRSLKKDHYVSDTGDVLYYQTDDKLSKEK</sequence>
<reference key="1">
    <citation type="journal article" date="2006" name="Plant Physiol. Biochem.">
        <title>Functional characterization of a plastidial omega-3 desaturase from sunflower (Helianthus annuus) in cyanobacteria.</title>
        <authorList>
            <person name="Venegas-Caleron M."/>
            <person name="Muro-Pastor A.M."/>
            <person name="Garces R."/>
            <person name="Martinez-Force E."/>
        </authorList>
    </citation>
    <scope>NUCLEOTIDE SEQUENCE [MRNA]</scope>
    <scope>FUNCTION</scope>
    <scope>CATALYTIC ACTIVITY</scope>
    <scope>PATHWAY</scope>
    <scope>TISSUE SPECIFICITY</scope>
</reference>